<dbReference type="EC" id="2.7.1.11" evidence="1"/>
<dbReference type="EMBL" id="AF298119">
    <property type="protein sequence ID" value="AAL39011.1"/>
    <property type="molecule type" value="Genomic_DNA"/>
</dbReference>
<dbReference type="SMR" id="Q8VU09"/>
<dbReference type="BRENDA" id="2.7.1.11">
    <property type="organism ID" value="314"/>
</dbReference>
<dbReference type="SABIO-RK" id="Q8VU09"/>
<dbReference type="UniPathway" id="UPA00109">
    <property type="reaction ID" value="UER00182"/>
</dbReference>
<dbReference type="GO" id="GO:0005737">
    <property type="term" value="C:cytoplasm"/>
    <property type="evidence" value="ECO:0007669"/>
    <property type="project" value="UniProtKB-SubCell"/>
</dbReference>
<dbReference type="GO" id="GO:0003872">
    <property type="term" value="F:6-phosphofructokinase activity"/>
    <property type="evidence" value="ECO:0007669"/>
    <property type="project" value="UniProtKB-UniRule"/>
</dbReference>
<dbReference type="GO" id="GO:0005524">
    <property type="term" value="F:ATP binding"/>
    <property type="evidence" value="ECO:0007669"/>
    <property type="project" value="UniProtKB-KW"/>
</dbReference>
<dbReference type="GO" id="GO:0046872">
    <property type="term" value="F:metal ion binding"/>
    <property type="evidence" value="ECO:0007669"/>
    <property type="project" value="UniProtKB-KW"/>
</dbReference>
<dbReference type="GO" id="GO:0006002">
    <property type="term" value="P:fructose 6-phosphate metabolic process"/>
    <property type="evidence" value="ECO:0007669"/>
    <property type="project" value="InterPro"/>
</dbReference>
<dbReference type="Gene3D" id="3.40.50.450">
    <property type="match status" value="1"/>
</dbReference>
<dbReference type="HAMAP" id="MF_01981">
    <property type="entry name" value="Phosphofructokinase_II_X"/>
    <property type="match status" value="1"/>
</dbReference>
<dbReference type="InterPro" id="IPR022953">
    <property type="entry name" value="ATP_PFK"/>
</dbReference>
<dbReference type="InterPro" id="IPR050929">
    <property type="entry name" value="PFKA"/>
</dbReference>
<dbReference type="InterPro" id="IPR000023">
    <property type="entry name" value="Phosphofructokinase_dom"/>
</dbReference>
<dbReference type="InterPro" id="IPR035966">
    <property type="entry name" value="PKF_sf"/>
</dbReference>
<dbReference type="InterPro" id="IPR012004">
    <property type="entry name" value="PyroP-dep_PFK_TP0108"/>
</dbReference>
<dbReference type="NCBIfam" id="NF005301">
    <property type="entry name" value="PRK06830.1"/>
    <property type="match status" value="1"/>
</dbReference>
<dbReference type="PANTHER" id="PTHR45770">
    <property type="entry name" value="ATP-DEPENDENT 6-PHOSPHOFRUCTOKINASE 1"/>
    <property type="match status" value="1"/>
</dbReference>
<dbReference type="Pfam" id="PF00365">
    <property type="entry name" value="PFK"/>
    <property type="match status" value="1"/>
</dbReference>
<dbReference type="PIRSF" id="PIRSF000534">
    <property type="entry name" value="PPi_PFK_TP0108"/>
    <property type="match status" value="1"/>
</dbReference>
<dbReference type="PRINTS" id="PR00476">
    <property type="entry name" value="PHFRCTKINASE"/>
</dbReference>
<dbReference type="SUPFAM" id="SSF53784">
    <property type="entry name" value="Phosphofructokinase"/>
    <property type="match status" value="1"/>
</dbReference>
<comment type="function">
    <text evidence="1 2">Catalyzes the phosphorylation of D-fructose 6-phosphate to fructose 1,6-bisphosphate by ATP, the first committing step of glycolysis.</text>
</comment>
<comment type="catalytic activity">
    <reaction evidence="1 2">
        <text>beta-D-fructose 6-phosphate + ATP = beta-D-fructose 1,6-bisphosphate + ADP + H(+)</text>
        <dbReference type="Rhea" id="RHEA:16109"/>
        <dbReference type="ChEBI" id="CHEBI:15378"/>
        <dbReference type="ChEBI" id="CHEBI:30616"/>
        <dbReference type="ChEBI" id="CHEBI:32966"/>
        <dbReference type="ChEBI" id="CHEBI:57634"/>
        <dbReference type="ChEBI" id="CHEBI:456216"/>
        <dbReference type="EC" id="2.7.1.11"/>
    </reaction>
</comment>
<comment type="cofactor">
    <cofactor evidence="1 2">
        <name>Mg(2+)</name>
        <dbReference type="ChEBI" id="CHEBI:18420"/>
    </cofactor>
</comment>
<comment type="activity regulation">
    <text evidence="2">AMP causes 20-40% inhibition and diphosphate causes 20-50% inhibition. ADP, citrate, PEP and FBP have no effect.</text>
</comment>
<comment type="biophysicochemical properties">
    <kinetics>
        <KM evidence="2">0.6 mM for ATP</KM>
        <Vmax evidence="2">180.0 umol/min/mg enzyme</Vmax>
    </kinetics>
</comment>
<comment type="pathway">
    <text evidence="1">Carbohydrate degradation; glycolysis; D-glyceraldehyde 3-phosphate and glycerone phosphate from D-glucose: step 3/4.</text>
</comment>
<comment type="subunit">
    <text evidence="1 2">Homodimer.</text>
</comment>
<comment type="subcellular location">
    <subcellularLocation>
        <location evidence="1">Cytoplasm</location>
    </subcellularLocation>
</comment>
<comment type="induction">
    <text>Present when grown on one-carbon (C(1)) compounds.</text>
</comment>
<comment type="similarity">
    <text evidence="1">Belongs to the phosphofructokinase type A (PFKA) family. PPi-dependent PFK group II subfamily. Atypical ATP-dependent clade 'X' sub-subfamily.</text>
</comment>
<evidence type="ECO:0000255" key="1">
    <source>
        <dbReference type="HAMAP-Rule" id="MF_01981"/>
    </source>
</evidence>
<evidence type="ECO:0000269" key="2">
    <source>
    </source>
</evidence>
<evidence type="ECO:0000305" key="3"/>
<organism>
    <name type="scientific">Amycolatopsis methanolica</name>
    <dbReference type="NCBI Taxonomy" id="1814"/>
    <lineage>
        <taxon>Bacteria</taxon>
        <taxon>Bacillati</taxon>
        <taxon>Actinomycetota</taxon>
        <taxon>Actinomycetes</taxon>
        <taxon>Pseudonocardiales</taxon>
        <taxon>Pseudonocardiaceae</taxon>
        <taxon>Amycolatopsis</taxon>
        <taxon>Amycolatopsis methanolica group</taxon>
    </lineage>
</organism>
<accession>Q8VU09</accession>
<keyword id="KW-0067">ATP-binding</keyword>
<keyword id="KW-0963">Cytoplasm</keyword>
<keyword id="KW-0903">Direct protein sequencing</keyword>
<keyword id="KW-0324">Glycolysis</keyword>
<keyword id="KW-0418">Kinase</keyword>
<keyword id="KW-0460">Magnesium</keyword>
<keyword id="KW-0479">Metal-binding</keyword>
<keyword id="KW-0547">Nucleotide-binding</keyword>
<keyword id="KW-0808">Transferase</keyword>
<protein>
    <recommendedName>
        <fullName evidence="1">ATP-dependent 6-phosphofructokinase</fullName>
        <shortName evidence="1">ATP-PFK</shortName>
        <shortName evidence="1">Phosphofructokinase</shortName>
        <ecNumber evidence="1">2.7.1.11</ecNumber>
    </recommendedName>
    <alternativeName>
        <fullName evidence="1">Phosphohexokinase</fullName>
    </alternativeName>
</protein>
<sequence length="459" mass="48934">MTLHLDDLRVRLLGECRYDSPFAEVLSTKRTSPHYVAEGDRVLLEDTVAMLAEHSLPSVQAPSFEAAGPRRKIYFDPARVTAGIVTCGGLCPGLNNVIRGLVQELSVHYRVKRIVGFRNGPGLTAAHRDDTVELTPEVVRDIHNLGGTILGSSRGGQDADEMVETLALHGVDVMFVIGGDGGMRAATFLSGAIRARGLDIAVIGVPKTIDNDLPFTDQSFGFQSAFARATDFISAVSVEAAASPNGVGIVKLMGRHSGFIAAYAALAANSADVVLIPEVPFALDGDDGLLAHVERLVRAKGFAVVVVAEGAGQDLFDAHGLPQLNGRGTDASGNVKLGNIGELLRTSIEAHLTAAGLAPTMRYIDPSYAIRSIPANAYDSVYCLRLAHAAVHAAMAGRTEAAVARWRRRFVHVPFSLMTRRRNQVDPDGDLWMSVLETTCQPAEFGAVAARERISSGFC</sequence>
<reference key="1">
    <citation type="journal article" date="2001" name="J. Bacteriol.">
        <title>Different physiological roles of ATP- and PP(i)-dependent phosphofructokinase isoenzymes in the methylotrophic actinomycete Amycolatopsis methanolica.</title>
        <authorList>
            <person name="Alves A.M."/>
            <person name="Euverink G.J."/>
            <person name="Santos H."/>
            <person name="Dijkhuizen L."/>
        </authorList>
    </citation>
    <scope>NUCLEOTIDE SEQUENCE [GENOMIC DNA]</scope>
    <scope>PROTEIN SEQUENCE OF 2-28 AND 423-451</scope>
    <scope>FUNCTION</scope>
    <scope>CATALYTIC ACTIVITY</scope>
    <scope>BIOPHYSICOCHEMICAL PROPERTIES</scope>
    <scope>COFACTOR</scope>
    <scope>SUBUNIT</scope>
    <scope>ACTIVITY REGULATION</scope>
    <source>
        <strain>DSM 44096 / JCM 8087 / NBRC 15065 / NCIMB 11946 / NRRL B-24139 / LMD 80.32 / 239</strain>
    </source>
</reference>
<name>PFKA_AMYME</name>
<proteinExistence type="evidence at protein level"/>
<gene>
    <name evidence="1" type="primary">pfkA</name>
    <name type="synonym">pfk</name>
</gene>
<feature type="initiator methionine" description="Removed" evidence="2">
    <location>
        <position position="1"/>
    </location>
</feature>
<feature type="chain" id="PRO_0000429712" description="ATP-dependent 6-phosphofructokinase">
    <location>
        <begin position="2"/>
        <end position="459"/>
    </location>
</feature>
<feature type="active site" description="Proton acceptor" evidence="1">
    <location>
        <position position="210"/>
    </location>
</feature>
<feature type="binding site" evidence="1">
    <location>
        <position position="89"/>
    </location>
    <ligand>
        <name>ATP</name>
        <dbReference type="ChEBI" id="CHEBI:30616"/>
    </ligand>
</feature>
<feature type="binding site" evidence="1">
    <location>
        <begin position="154"/>
        <end position="155"/>
    </location>
    <ligand>
        <name>ATP</name>
        <dbReference type="ChEBI" id="CHEBI:30616"/>
    </ligand>
</feature>
<feature type="binding site" evidence="1">
    <location>
        <begin position="179"/>
        <end position="182"/>
    </location>
    <ligand>
        <name>ATP</name>
        <dbReference type="ChEBI" id="CHEBI:30616"/>
    </ligand>
</feature>
<feature type="binding site" evidence="1">
    <location>
        <position position="180"/>
    </location>
    <ligand>
        <name>Mg(2+)</name>
        <dbReference type="ChEBI" id="CHEBI:18420"/>
        <note>catalytic</note>
    </ligand>
</feature>
<feature type="binding site" evidence="1">
    <location>
        <begin position="208"/>
        <end position="210"/>
    </location>
    <ligand>
        <name>substrate</name>
    </ligand>
</feature>
<feature type="binding site" evidence="1">
    <location>
        <begin position="253"/>
        <end position="255"/>
    </location>
    <ligand>
        <name>substrate</name>
    </ligand>
</feature>
<feature type="binding site" evidence="1">
    <location>
        <position position="309"/>
    </location>
    <ligand>
        <name>substrate</name>
    </ligand>
</feature>
<feature type="binding site" evidence="1">
    <location>
        <begin position="368"/>
        <end position="371"/>
    </location>
    <ligand>
        <name>substrate</name>
    </ligand>
</feature>
<feature type="site" description="Important for substrate specificity; cannot use PPi as phosphoryl donor" evidence="1">
    <location>
        <position position="181"/>
    </location>
</feature>
<feature type="sequence conflict" description="In Ref. 1; AA sequence." evidence="3" ref="1">
    <original>C</original>
    <variation>R</variation>
    <location>
        <position position="16"/>
    </location>
</feature>
<feature type="sequence conflict" description="In Ref. 1; AA sequence." evidence="3" ref="1">
    <original>LS</original>
    <variation>HT</variation>
    <location>
        <begin position="26"/>
        <end position="27"/>
    </location>
</feature>